<evidence type="ECO:0000250" key="1">
    <source>
        <dbReference type="UniProtKB" id="P26392"/>
    </source>
</evidence>
<evidence type="ECO:0000269" key="2">
    <source>
    </source>
</evidence>
<evidence type="ECO:0000303" key="3">
    <source>
    </source>
</evidence>
<evidence type="ECO:0000305" key="4"/>
<evidence type="ECO:0000305" key="5">
    <source>
    </source>
</evidence>
<keyword id="KW-0045">Antibiotic biosynthesis</keyword>
<keyword id="KW-0119">Carbohydrate metabolism</keyword>
<keyword id="KW-0460">Magnesium</keyword>
<keyword id="KW-0479">Metal-binding</keyword>
<keyword id="KW-0520">NAD</keyword>
<keyword id="KW-0521">NADP</keyword>
<keyword id="KW-0560">Oxidoreductase</keyword>
<keyword id="KW-0759">Streptomycin biosynthesis</keyword>
<protein>
    <recommendedName>
        <fullName evidence="1">dTDP-4-dehydrorhamnose reductase</fullName>
        <ecNumber evidence="1">1.1.1.133</ecNumber>
    </recommendedName>
    <alternativeName>
        <fullName evidence="1">dTDP-4-keto-L-rhamnose reductase</fullName>
    </alternativeName>
    <alternativeName>
        <fullName evidence="1">dTDP-6-deoxy-L-lyxo-4-hexulose reductase</fullName>
    </alternativeName>
    <alternativeName>
        <fullName evidence="1">dTDP-6-deoxy-L-mannose dehydrogenase</fullName>
    </alternativeName>
    <alternativeName>
        <fullName evidence="1">dTDP-L-rhamnose synthase</fullName>
    </alternativeName>
</protein>
<accession>P29781</accession>
<dbReference type="EC" id="1.1.1.133" evidence="1"/>
<dbReference type="EMBL" id="X62567">
    <property type="protein sequence ID" value="CAA44443.1"/>
    <property type="molecule type" value="Genomic_DNA"/>
</dbReference>
<dbReference type="PIR" id="S18618">
    <property type="entry name" value="SYSMPG"/>
</dbReference>
<dbReference type="SMR" id="P29781"/>
<dbReference type="UniPathway" id="UPA00066"/>
<dbReference type="UniPathway" id="UPA00124"/>
<dbReference type="GO" id="GO:0005829">
    <property type="term" value="C:cytosol"/>
    <property type="evidence" value="ECO:0007669"/>
    <property type="project" value="TreeGrafter"/>
</dbReference>
<dbReference type="GO" id="GO:0008831">
    <property type="term" value="F:dTDP-4-dehydrorhamnose reductase activity"/>
    <property type="evidence" value="ECO:0000250"/>
    <property type="project" value="UniProtKB"/>
</dbReference>
<dbReference type="GO" id="GO:0046872">
    <property type="term" value="F:metal ion binding"/>
    <property type="evidence" value="ECO:0007669"/>
    <property type="project" value="UniProtKB-KW"/>
</dbReference>
<dbReference type="GO" id="GO:0019305">
    <property type="term" value="P:dTDP-rhamnose biosynthetic process"/>
    <property type="evidence" value="ECO:0007669"/>
    <property type="project" value="UniProtKB-UniPathway"/>
</dbReference>
<dbReference type="GO" id="GO:0000271">
    <property type="term" value="P:polysaccharide biosynthetic process"/>
    <property type="evidence" value="ECO:0000250"/>
    <property type="project" value="UniProtKB"/>
</dbReference>
<dbReference type="GO" id="GO:0019872">
    <property type="term" value="P:streptomycin biosynthetic process"/>
    <property type="evidence" value="ECO:0007669"/>
    <property type="project" value="UniProtKB-UniPathway"/>
</dbReference>
<dbReference type="CDD" id="cd05254">
    <property type="entry name" value="dTDP_HR_like_SDR_e"/>
    <property type="match status" value="1"/>
</dbReference>
<dbReference type="Gene3D" id="3.40.50.720">
    <property type="entry name" value="NAD(P)-binding Rossmann-like Domain"/>
    <property type="match status" value="1"/>
</dbReference>
<dbReference type="Gene3D" id="3.90.25.10">
    <property type="entry name" value="UDP-galactose 4-epimerase, domain 1"/>
    <property type="match status" value="1"/>
</dbReference>
<dbReference type="InterPro" id="IPR005913">
    <property type="entry name" value="dTDP_dehydrorham_reduct"/>
</dbReference>
<dbReference type="InterPro" id="IPR036291">
    <property type="entry name" value="NAD(P)-bd_dom_sf"/>
</dbReference>
<dbReference type="InterPro" id="IPR029903">
    <property type="entry name" value="RmlD-like-bd"/>
</dbReference>
<dbReference type="NCBIfam" id="TIGR01214">
    <property type="entry name" value="rmlD"/>
    <property type="match status" value="1"/>
</dbReference>
<dbReference type="PANTHER" id="PTHR10491">
    <property type="entry name" value="DTDP-4-DEHYDRORHAMNOSE REDUCTASE"/>
    <property type="match status" value="1"/>
</dbReference>
<dbReference type="PANTHER" id="PTHR10491:SF4">
    <property type="entry name" value="METHIONINE ADENOSYLTRANSFERASE 2 SUBUNIT BETA"/>
    <property type="match status" value="1"/>
</dbReference>
<dbReference type="Pfam" id="PF04321">
    <property type="entry name" value="RmlD_sub_bind"/>
    <property type="match status" value="1"/>
</dbReference>
<dbReference type="SUPFAM" id="SSF51735">
    <property type="entry name" value="NAD(P)-binding Rossmann-fold domains"/>
    <property type="match status" value="1"/>
</dbReference>
<reference key="1">
    <citation type="journal article" date="1991" name="Mol. Gen. Genet.">
        <title>Genetics of streptomycin production in Streptomyces griseus: molecular structure and putative function of genes strELMB2N.</title>
        <authorList>
            <person name="Pissowotzki K."/>
            <person name="Mansouri K."/>
            <person name="Piepersberg W."/>
        </authorList>
    </citation>
    <scope>NUCLEOTIDE SEQUENCE [GENOMIC DNA]</scope>
    <scope>FUNCTION IN BIOSYNTHESIS OF THE STREPTOSE MOIETY OF STREPTOMYCIN</scope>
    <scope>PATHWAY</scope>
    <source>
        <strain>N2-3-11</strain>
    </source>
</reference>
<name>RMLD_STRGR</name>
<comment type="function">
    <text evidence="1 2">Involved in the biosynthesis of the streptose moiety of streptomycin (PubMed:1661369). Catalyzes the reduction of dTDP-6-deoxy-L-lyxo-4-hexulose to yield dTDP-L-rhamnose (By similarity). RmlD uses NADH and NADPH nearly equally well (By similarity).</text>
</comment>
<comment type="catalytic activity">
    <reaction evidence="1">
        <text>dTDP-beta-L-rhamnose + NADP(+) = dTDP-4-dehydro-beta-L-rhamnose + NADPH + H(+)</text>
        <dbReference type="Rhea" id="RHEA:21796"/>
        <dbReference type="ChEBI" id="CHEBI:15378"/>
        <dbReference type="ChEBI" id="CHEBI:57510"/>
        <dbReference type="ChEBI" id="CHEBI:57783"/>
        <dbReference type="ChEBI" id="CHEBI:58349"/>
        <dbReference type="ChEBI" id="CHEBI:62830"/>
        <dbReference type="EC" id="1.1.1.133"/>
    </reaction>
</comment>
<comment type="cofactor">
    <cofactor evidence="1">
        <name>Mg(2+)</name>
        <dbReference type="ChEBI" id="CHEBI:18420"/>
    </cofactor>
    <text evidence="1">Binds 1 Mg(2+) ion per monomer.</text>
</comment>
<comment type="pathway">
    <text evidence="5">Carbohydrate biosynthesis; dTDP-L-rhamnose biosynthesis.</text>
</comment>
<comment type="pathway">
    <text evidence="5">Antibiotic biosynthesis; streptomycin biosynthesis.</text>
</comment>
<comment type="subunit">
    <text evidence="1">Homodimer.</text>
</comment>
<comment type="similarity">
    <text evidence="4">Belongs to the dTDP-4-dehydrorhamnose reductase family.</text>
</comment>
<sequence length="304" mass="32215">MSPYPRPRWLVTGASGMLGRELTPLLDRRGAAVTALGRGHLDITDGAAVRSAVAEHRPAVVVNCAAWTAVDEAESEPALAMAVNGEGPRHLAQACRAVGAVLLQLSTDYVFPGSGGRPYREDHPTGPRTVYGCTKRAGERAVLEVLPDTGYIVRTAWLYGAGGPNFVAKMIRLEADEDTVLVVDDQHGQPTWTADLADRLAALGAAALAGTAPAGIYHATNTGGTTWNALAPETFRLLGADPARVRPTTSLALARPAVRPRYSVLDQSRWKAAGLEPLRHWRAALTESFPALCGRAGRPVPGPR</sequence>
<organism>
    <name type="scientific">Streptomyces griseus</name>
    <dbReference type="NCBI Taxonomy" id="1911"/>
    <lineage>
        <taxon>Bacteria</taxon>
        <taxon>Bacillati</taxon>
        <taxon>Actinomycetota</taxon>
        <taxon>Actinomycetes</taxon>
        <taxon>Kitasatosporales</taxon>
        <taxon>Streptomycetaceae</taxon>
        <taxon>Streptomyces</taxon>
    </lineage>
</organism>
<gene>
    <name evidence="3" type="primary">strL</name>
</gene>
<proteinExistence type="evidence at protein level"/>
<feature type="chain" id="PRO_0000207989" description="dTDP-4-dehydrorhamnose reductase">
    <location>
        <begin position="1"/>
        <end position="304"/>
    </location>
</feature>
<feature type="active site" description="Proton donor/acceptor" evidence="1">
    <location>
        <position position="131"/>
    </location>
</feature>
<feature type="binding site" evidence="1">
    <location>
        <begin position="16"/>
        <end position="18"/>
    </location>
    <ligand>
        <name>NADH</name>
        <dbReference type="ChEBI" id="CHEBI:57945"/>
    </ligand>
</feature>
<feature type="binding site" evidence="1">
    <location>
        <begin position="17"/>
        <end position="18"/>
    </location>
    <ligand>
        <name>NADPH</name>
        <dbReference type="ChEBI" id="CHEBI:57783"/>
    </ligand>
</feature>
<feature type="binding site" evidence="1">
    <location>
        <begin position="42"/>
        <end position="43"/>
    </location>
    <ligand>
        <name>NADH</name>
        <dbReference type="ChEBI" id="CHEBI:57945"/>
    </ligand>
</feature>
<feature type="binding site" evidence="1">
    <location>
        <begin position="42"/>
        <end position="43"/>
    </location>
    <ligand>
        <name>NADPH</name>
        <dbReference type="ChEBI" id="CHEBI:57783"/>
    </ligand>
</feature>
<feature type="binding site" evidence="1">
    <location>
        <begin position="66"/>
        <end position="68"/>
    </location>
    <ligand>
        <name>NADH</name>
        <dbReference type="ChEBI" id="CHEBI:57945"/>
    </ligand>
</feature>
<feature type="binding site" evidence="1">
    <location>
        <begin position="66"/>
        <end position="68"/>
    </location>
    <ligand>
        <name>NADPH</name>
        <dbReference type="ChEBI" id="CHEBI:57783"/>
    </ligand>
</feature>
<feature type="binding site" evidence="1">
    <location>
        <begin position="107"/>
        <end position="108"/>
    </location>
    <ligand>
        <name>dTDP-beta-L-rhamnose</name>
        <dbReference type="ChEBI" id="CHEBI:57510"/>
    </ligand>
</feature>
<feature type="binding site" evidence="1">
    <location>
        <position position="131"/>
    </location>
    <ligand>
        <name>NADH</name>
        <dbReference type="ChEBI" id="CHEBI:57945"/>
    </ligand>
</feature>
<feature type="binding site" evidence="1">
    <location>
        <position position="131"/>
    </location>
    <ligand>
        <name>NADPH</name>
        <dbReference type="ChEBI" id="CHEBI:57783"/>
    </ligand>
</feature>
<feature type="binding site" evidence="1">
    <location>
        <position position="135"/>
    </location>
    <ligand>
        <name>NADH</name>
        <dbReference type="ChEBI" id="CHEBI:57945"/>
    </ligand>
</feature>
<feature type="binding site" evidence="1">
    <location>
        <position position="135"/>
    </location>
    <ligand>
        <name>NADPH</name>
        <dbReference type="ChEBI" id="CHEBI:57783"/>
    </ligand>
</feature>
<feature type="binding site" evidence="1">
    <location>
        <position position="157"/>
    </location>
    <ligand>
        <name>dTDP-beta-L-rhamnose</name>
        <dbReference type="ChEBI" id="CHEBI:57510"/>
    </ligand>
</feature>
<feature type="site" description="Could provide a fine-tuning to achieve optimal pKa matching between active site and substrate" evidence="1">
    <location>
        <position position="107"/>
    </location>
</feature>